<reference key="1">
    <citation type="journal article" date="1990" name="Curr. Top. Microbiol. Immunol.">
        <title>Analysis of the protein-coding content of the sequence of human cytomegalovirus strain AD169.</title>
        <authorList>
            <person name="Chee M.S."/>
            <person name="Bankier A.T."/>
            <person name="Beck S."/>
            <person name="Bohni R."/>
            <person name="Brown C.M."/>
            <person name="Cerny R."/>
            <person name="Horsnell T."/>
            <person name="Hutchison C.A. III"/>
            <person name="Kouzarides T."/>
            <person name="Martignetti J.A."/>
            <person name="Preddie E."/>
            <person name="Satchwell S.C."/>
            <person name="Tomlinson P."/>
            <person name="Weston K.M."/>
            <person name="Barrell B.G."/>
        </authorList>
    </citation>
    <scope>NUCLEOTIDE SEQUENCE [LARGE SCALE GENOMIC DNA]</scope>
</reference>
<reference key="2">
    <citation type="journal article" date="2003" name="J. Gen. Virol.">
        <title>The human cytomegalovirus genome revisited: comparison with the chimpanzee cytomegalovirus genome.</title>
        <authorList>
            <person name="Davison A.J."/>
            <person name="Dolan A."/>
            <person name="Akter P."/>
            <person name="Addison C."/>
            <person name="Dargan D.J."/>
            <person name="Alcendor D.J."/>
            <person name="McGeoch D.J."/>
            <person name="Hayward G.S."/>
        </authorList>
    </citation>
    <scope>GENOME REANNOTATION</scope>
</reference>
<reference key="3">
    <citation type="journal article" date="2003" name="J. Gen. Virol.">
        <authorList>
            <person name="Davison A.J."/>
            <person name="Dolan A."/>
            <person name="Akter P."/>
            <person name="Addison C."/>
            <person name="Dargan D.J."/>
            <person name="Alcendor D.J."/>
            <person name="McGeoch D.J."/>
            <person name="Hayward G.S."/>
        </authorList>
    </citation>
    <scope>ERRATUM OF PUBMED:12533697</scope>
</reference>
<keyword id="KW-0002">3D-structure</keyword>
<keyword id="KW-0325">Glycoprotein</keyword>
<keyword id="KW-0472">Membrane</keyword>
<keyword id="KW-1185">Reference proteome</keyword>
<keyword id="KW-0812">Transmembrane</keyword>
<keyword id="KW-1133">Transmembrane helix</keyword>
<gene>
    <name type="primary">UL78</name>
</gene>
<dbReference type="EMBL" id="X17403">
    <property type="protein sequence ID" value="CAA35351.1"/>
    <property type="molecule type" value="Genomic_DNA"/>
</dbReference>
<dbReference type="EMBL" id="BK000394">
    <property type="protein sequence ID" value="DAA00174.1"/>
    <property type="molecule type" value="Genomic_DNA"/>
</dbReference>
<dbReference type="PIR" id="S09841">
    <property type="entry name" value="S09841"/>
</dbReference>
<dbReference type="RefSeq" id="YP_081526.1">
    <property type="nucleotide sequence ID" value="NC_006273.2"/>
</dbReference>
<dbReference type="PDB" id="8Z1E">
    <property type="method" value="EM"/>
    <property type="resolution" value="3.12 A"/>
    <property type="chains" value="A/B/R=34-318"/>
</dbReference>
<dbReference type="PDBsum" id="8Z1E"/>
<dbReference type="EMDB" id="EMD-39724"/>
<dbReference type="SMR" id="P16751"/>
<dbReference type="GlyCosmos" id="P16751">
    <property type="glycosylation" value="1 site, No reported glycans"/>
</dbReference>
<dbReference type="DNASU" id="3077549"/>
<dbReference type="GeneID" id="3077549"/>
<dbReference type="KEGG" id="vg:3077549"/>
<dbReference type="Proteomes" id="UP000008991">
    <property type="component" value="Segment"/>
</dbReference>
<dbReference type="Proteomes" id="UP000008992">
    <property type="component" value="Segment"/>
</dbReference>
<dbReference type="GO" id="GO:0016020">
    <property type="term" value="C:membrane"/>
    <property type="evidence" value="ECO:0007669"/>
    <property type="project" value="UniProtKB-SubCell"/>
</dbReference>
<dbReference type="Gene3D" id="1.20.1070.10">
    <property type="entry name" value="Rhodopsin 7-helix transmembrane proteins"/>
    <property type="match status" value="1"/>
</dbReference>
<dbReference type="InterPro" id="IPR017452">
    <property type="entry name" value="GPCR_Rhodpsn_7TM"/>
</dbReference>
<dbReference type="SUPFAM" id="SSF81321">
    <property type="entry name" value="Family A G protein-coupled receptor-like"/>
    <property type="match status" value="1"/>
</dbReference>
<dbReference type="PROSITE" id="PS50262">
    <property type="entry name" value="G_PROTEIN_RECEP_F1_2"/>
    <property type="match status" value="1"/>
</dbReference>
<organismHost>
    <name type="scientific">Homo sapiens</name>
    <name type="common">Human</name>
    <dbReference type="NCBI Taxonomy" id="9606"/>
</organismHost>
<name>UL78_HCMVA</name>
<protein>
    <recommendedName>
        <fullName>Uncharacterized protein UL78</fullName>
    </recommendedName>
</protein>
<organism>
    <name type="scientific">Human cytomegalovirus (strain AD169)</name>
    <name type="common">HHV-5</name>
    <name type="synonym">Human herpesvirus 5</name>
    <dbReference type="NCBI Taxonomy" id="10360"/>
    <lineage>
        <taxon>Viruses</taxon>
        <taxon>Duplodnaviria</taxon>
        <taxon>Heunggongvirae</taxon>
        <taxon>Peploviricota</taxon>
        <taxon>Herviviricetes</taxon>
        <taxon>Herpesvirales</taxon>
        <taxon>Orthoherpesviridae</taxon>
        <taxon>Betaherpesvirinae</taxon>
        <taxon>Cytomegalovirus</taxon>
        <taxon>Cytomegalovirus humanbeta5</taxon>
        <taxon>Human cytomegalovirus</taxon>
    </lineage>
</organism>
<accession>P16751</accession>
<accession>Q7M6L4</accession>
<comment type="subcellular location">
    <subcellularLocation>
        <location evidence="2">Membrane</location>
        <topology evidence="2">Multi-pass membrane protein</topology>
    </subcellularLocation>
</comment>
<proteinExistence type="evidence at protein level"/>
<evidence type="ECO:0000255" key="1"/>
<evidence type="ECO:0000305" key="2"/>
<evidence type="ECO:0007829" key="3">
    <source>
        <dbReference type="PDB" id="8Z1E"/>
    </source>
</evidence>
<sequence length="431" mass="47357">MSPSVEETTSVTESIMFAIVSFKHMGPFEGYSMSADRAASDLLIGMFGSVSLVNLLTIIGCLWVLRVTRPPVSVMIFTWNLVLSQFFSILATMLSKGIMLRGALNLSLCRLVLFVDDVGLYSTALFFLFLILDRLSAISYGRDLWHHETRENAGVALYAVAFAWVLSIVAAVPTAATGSLDYRWLGCQIPIQYAAVDLTIKMWFLLGAPMIAVLANVVELAYSDRRDHVWSYVGRVCTFYVTCLMLFVPYYCFRVLRGVLQPASAAGTGFGIMDYVELATRTLLTMRLGILPLFIIAFFSREPTKDLDDSFDYLVERCQQSCHGHFVRRLVQALKRAMYSVELAVCYFSTSVRDVAEAVKKSSSRCYADATSAAVVVTTTTSEKATLVEHAEGMASEMCPGTTIDVSAESSSVLCTDGENTVASDATVTAL</sequence>
<feature type="chain" id="PRO_0000115339" description="Uncharacterized protein UL78">
    <location>
        <begin position="1"/>
        <end position="431"/>
    </location>
</feature>
<feature type="transmembrane region" description="Helical" evidence="1">
    <location>
        <begin position="42"/>
        <end position="62"/>
    </location>
</feature>
<feature type="transmembrane region" description="Helical" evidence="1">
    <location>
        <begin position="74"/>
        <end position="94"/>
    </location>
</feature>
<feature type="transmembrane region" description="Helical" evidence="1">
    <location>
        <begin position="111"/>
        <end position="131"/>
    </location>
</feature>
<feature type="transmembrane region" description="Helical" evidence="1">
    <location>
        <begin position="153"/>
        <end position="173"/>
    </location>
</feature>
<feature type="transmembrane region" description="Helical" evidence="1">
    <location>
        <begin position="202"/>
        <end position="222"/>
    </location>
</feature>
<feature type="transmembrane region" description="Helical" evidence="1">
    <location>
        <begin position="236"/>
        <end position="256"/>
    </location>
</feature>
<feature type="transmembrane region" description="Helical" evidence="1">
    <location>
        <begin position="279"/>
        <end position="299"/>
    </location>
</feature>
<feature type="glycosylation site" description="N-linked (GlcNAc...) asparagine; by host" evidence="1">
    <location>
        <position position="105"/>
    </location>
</feature>
<feature type="helix" evidence="3">
    <location>
        <begin position="35"/>
        <end position="64"/>
    </location>
</feature>
<feature type="helix" evidence="3">
    <location>
        <begin position="72"/>
        <end position="95"/>
    </location>
</feature>
<feature type="turn" evidence="3">
    <location>
        <begin position="101"/>
        <end position="103"/>
    </location>
</feature>
<feature type="helix" evidence="3">
    <location>
        <begin position="106"/>
        <end position="139"/>
    </location>
</feature>
<feature type="helix" evidence="3">
    <location>
        <begin position="145"/>
        <end position="147"/>
    </location>
</feature>
<feature type="helix" evidence="3">
    <location>
        <begin position="150"/>
        <end position="170"/>
    </location>
</feature>
<feature type="helix" evidence="3">
    <location>
        <begin position="172"/>
        <end position="175"/>
    </location>
</feature>
<feature type="strand" evidence="3">
    <location>
        <begin position="182"/>
        <end position="188"/>
    </location>
</feature>
<feature type="helix" evidence="3">
    <location>
        <begin position="191"/>
        <end position="193"/>
    </location>
</feature>
<feature type="helix" evidence="3">
    <location>
        <begin position="194"/>
        <end position="205"/>
    </location>
</feature>
<feature type="helix" evidence="3">
    <location>
        <begin position="208"/>
        <end position="220"/>
    </location>
</feature>
<feature type="turn" evidence="3">
    <location>
        <begin position="225"/>
        <end position="228"/>
    </location>
</feature>
<feature type="helix" evidence="3">
    <location>
        <begin position="230"/>
        <end position="260"/>
    </location>
</feature>
<feature type="helix" evidence="3">
    <location>
        <begin position="272"/>
        <end position="285"/>
    </location>
</feature>
<feature type="helix" evidence="3">
    <location>
        <begin position="287"/>
        <end position="290"/>
    </location>
</feature>
<feature type="helix" evidence="3">
    <location>
        <begin position="293"/>
        <end position="297"/>
    </location>
</feature>
<feature type="strand" evidence="3">
    <location>
        <begin position="299"/>
        <end position="302"/>
    </location>
</feature>
<feature type="helix" evidence="3">
    <location>
        <begin position="303"/>
        <end position="316"/>
    </location>
</feature>